<accession>P21211</accession>
<sequence>MLSLDQIPHHIRHGIVGSRLIQIRGRVTQVTGTLLKAVVPGVRIGELCYLRNPDNSLSLQAEVIGFAQHQALLIPLGEMYGISSNTEVSPTGQCIRLGWVNICWGRCWMV</sequence>
<keyword id="KW-0614">Plasmid</keyword>
<proteinExistence type="evidence at transcript level"/>
<comment type="induction">
    <text>Temperature seems to play the major role in regulation of transcription of the lcrE-containing operon of pYV, whereas Ca(2+) concentration has only a moderate effect at 37 degrees Celsius, and no effect at room temperature.</text>
</comment>
<name>YLC6_YEREN</name>
<organism>
    <name type="scientific">Yersinia enterocolitica</name>
    <dbReference type="NCBI Taxonomy" id="630"/>
    <lineage>
        <taxon>Bacteria</taxon>
        <taxon>Pseudomonadati</taxon>
        <taxon>Pseudomonadota</taxon>
        <taxon>Gammaproteobacteria</taxon>
        <taxon>Enterobacterales</taxon>
        <taxon>Yersiniaceae</taxon>
        <taxon>Yersinia</taxon>
    </lineage>
</organism>
<dbReference type="EMBL" id="M32097">
    <property type="protein sequence ID" value="AAA98428.1"/>
    <property type="molecule type" value="Genomic_DNA"/>
</dbReference>
<dbReference type="PIR" id="G35392">
    <property type="entry name" value="G35392"/>
</dbReference>
<dbReference type="SMR" id="P21211"/>
<dbReference type="GO" id="GO:0046034">
    <property type="term" value="P:ATP metabolic process"/>
    <property type="evidence" value="ECO:0007669"/>
    <property type="project" value="InterPro"/>
</dbReference>
<dbReference type="GO" id="GO:1902600">
    <property type="term" value="P:proton transmembrane transport"/>
    <property type="evidence" value="ECO:0007669"/>
    <property type="project" value="InterPro"/>
</dbReference>
<dbReference type="CDD" id="cd18117">
    <property type="entry name" value="ATP-synt_flagellum-secretory_path_III_N"/>
    <property type="match status" value="1"/>
</dbReference>
<dbReference type="Gene3D" id="3.40.50.12240">
    <property type="match status" value="1"/>
</dbReference>
<dbReference type="InterPro" id="IPR004100">
    <property type="entry name" value="ATPase_F1/V1/A1_a/bsu_N"/>
</dbReference>
<dbReference type="Pfam" id="PF02874">
    <property type="entry name" value="ATP-synt_ab_N"/>
    <property type="match status" value="1"/>
</dbReference>
<geneLocation type="plasmid">
    <name>pYV</name>
</geneLocation>
<feature type="chain" id="PRO_0000203507" description="Uncharacterized 12.2 kDa protein in lcrE 5'region">
    <location>
        <begin position="1"/>
        <end position="110"/>
    </location>
</feature>
<protein>
    <recommendedName>
        <fullName>Uncharacterized 12.2 kDa protein in lcrE 5'region</fullName>
    </recommendedName>
    <alternativeName>
        <fullName>ORF6</fullName>
    </alternativeName>
</protein>
<reference key="1">
    <citation type="journal article" date="1990" name="J. Bacteriol.">
        <title>The lcrE gene is part of an operon in the lcr region of Yersinia enterocolitica O:3.</title>
        <authorList>
            <person name="Viitanen A.-M."/>
            <person name="Toivanen P."/>
            <person name="Skurnik M."/>
        </authorList>
    </citation>
    <scope>NUCLEOTIDE SEQUENCE [GENOMIC DNA]</scope>
    <source>
        <strain>Serotype O:3</strain>
    </source>
</reference>